<protein>
    <recommendedName>
        <fullName>Protein AlbB</fullName>
    </recommendedName>
    <alternativeName>
        <fullName>Albonoursin synthase protein B</fullName>
    </alternativeName>
</protein>
<keyword id="KW-0002">3D-structure</keyword>
<proteinExistence type="evidence at protein level"/>
<dbReference type="EMBL" id="AY129235">
    <property type="protein sequence ID" value="AAN07908.1"/>
    <property type="molecule type" value="Genomic_DNA"/>
</dbReference>
<dbReference type="RefSeq" id="WP_039632579.1">
    <property type="nucleotide sequence ID" value="NZ_LJSN01000003.1"/>
</dbReference>
<dbReference type="PDB" id="8UC3">
    <property type="method" value="EM"/>
    <property type="resolution" value="2.78 A"/>
    <property type="chains" value="C/D=1-105"/>
</dbReference>
<dbReference type="PDBsum" id="8UC3"/>
<dbReference type="EMDB" id="EMD-42114"/>
<dbReference type="SMR" id="Q8GED8"/>
<dbReference type="InterPro" id="IPR046074">
    <property type="entry name" value="DUF6092"/>
</dbReference>
<dbReference type="Pfam" id="PF19585">
    <property type="entry name" value="DUF6092"/>
    <property type="match status" value="1"/>
</dbReference>
<feature type="chain" id="PRO_0000423358" description="Protein AlbB">
    <location>
        <begin position="1"/>
        <end position="105"/>
    </location>
</feature>
<feature type="helix" evidence="2">
    <location>
        <begin position="10"/>
        <end position="28"/>
    </location>
</feature>
<feature type="strand" evidence="2">
    <location>
        <begin position="31"/>
        <end position="33"/>
    </location>
</feature>
<feature type="helix" evidence="2">
    <location>
        <begin position="38"/>
        <end position="54"/>
    </location>
</feature>
<feature type="turn" evidence="2">
    <location>
        <begin position="55"/>
        <end position="57"/>
    </location>
</feature>
<feature type="helix" evidence="2">
    <location>
        <begin position="63"/>
        <end position="75"/>
    </location>
</feature>
<feature type="helix" evidence="2">
    <location>
        <begin position="84"/>
        <end position="98"/>
    </location>
</feature>
<feature type="helix" evidence="2">
    <location>
        <begin position="99"/>
        <end position="102"/>
    </location>
</feature>
<reference key="1">
    <citation type="journal article" date="2002" name="Chem. Biol.">
        <title>The albonoursin gene cluster of S noursei biosynthesis of diketopiperazine metabolites independent of nonribosomal peptide synthetases.</title>
        <authorList>
            <person name="Lautru S."/>
            <person name="Gondry M."/>
            <person name="Genet R."/>
            <person name="Pernodet J.L."/>
        </authorList>
    </citation>
    <scope>NUCLEOTIDE SEQUENCE [GENOMIC DNA]</scope>
    <scope>FUNCTION</scope>
    <scope>NOMENCLATURE</scope>
    <source>
        <strain>ATCC 11455 / DSM 40635 / JCM 4922 / KCC S-0922 / NBRC 15452 / NCIMB 8593 / NRRL B-1714 / 48240</strain>
    </source>
</reference>
<comment type="function">
    <text evidence="1">Involved in the biosynthesis of albonoursin (cyclo[(alpha,beta-dehydro-Phe)-(alpha,beta-dehydro-Leu)]), an antibacterial peptide. AlbB is essential for cyclic dipeptide oxidase AlbA (CDO) activity.</text>
</comment>
<evidence type="ECO:0000269" key="1">
    <source>
    </source>
</evidence>
<evidence type="ECO:0007829" key="2">
    <source>
        <dbReference type="PDB" id="8UC3"/>
    </source>
</evidence>
<accession>Q8GED8</accession>
<gene>
    <name type="primary">albB</name>
</gene>
<sequence>MNPGETVLPPQLREEIALLAVYLLSSGRGLLEEPADYGIYRCTDGARRALQLLDEHGGSTARLTAVRERLDEVMFAPMGEDRDMGAILDDLCRQMADALPEIETP</sequence>
<name>ALBB_STRNR</name>
<organism>
    <name type="scientific">Streptomyces noursei</name>
    <name type="common">Streptomyces albulus</name>
    <dbReference type="NCBI Taxonomy" id="1971"/>
    <lineage>
        <taxon>Bacteria</taxon>
        <taxon>Bacillati</taxon>
        <taxon>Actinomycetota</taxon>
        <taxon>Actinomycetes</taxon>
        <taxon>Kitasatosporales</taxon>
        <taxon>Streptomycetaceae</taxon>
        <taxon>Streptomyces</taxon>
    </lineage>
</organism>